<sequence length="192" mass="20663">MITISDAAQAHFVTLLADQPEGTHIRVFVISPGTATAECGVSYCPPDAVEADDMEFEFNGFNAMVDEKSAPFLEEASIDFVTDQLGSQLTLKAPNAKMRKVASDAPLSERIDYVIQSEINPQLASHGGNIMLVEVTEEGTAILQFGGGCNGCSMVDVTLKDGIETQLLEKFPGELTGVKDVTEHQHGDHSYQ</sequence>
<feature type="chain" id="PRO_1000088202" description="Fe/S biogenesis protein NfuA">
    <location>
        <begin position="1"/>
        <end position="192"/>
    </location>
</feature>
<feature type="binding site" evidence="1">
    <location>
        <position position="149"/>
    </location>
    <ligand>
        <name>[4Fe-4S] cluster</name>
        <dbReference type="ChEBI" id="CHEBI:49883"/>
    </ligand>
</feature>
<feature type="binding site" evidence="1">
    <location>
        <position position="152"/>
    </location>
    <ligand>
        <name>[4Fe-4S] cluster</name>
        <dbReference type="ChEBI" id="CHEBI:49883"/>
    </ligand>
</feature>
<organism>
    <name type="scientific">Shewanella sediminis (strain HAW-EB3)</name>
    <dbReference type="NCBI Taxonomy" id="425104"/>
    <lineage>
        <taxon>Bacteria</taxon>
        <taxon>Pseudomonadati</taxon>
        <taxon>Pseudomonadota</taxon>
        <taxon>Gammaproteobacteria</taxon>
        <taxon>Alteromonadales</taxon>
        <taxon>Shewanellaceae</taxon>
        <taxon>Shewanella</taxon>
    </lineage>
</organism>
<dbReference type="EMBL" id="CP000821">
    <property type="protein sequence ID" value="ABV34792.1"/>
    <property type="molecule type" value="Genomic_DNA"/>
</dbReference>
<dbReference type="RefSeq" id="WP_012004318.1">
    <property type="nucleotide sequence ID" value="NC_009831.1"/>
</dbReference>
<dbReference type="SMR" id="A8FPL9"/>
<dbReference type="STRING" id="425104.Ssed_0179"/>
<dbReference type="KEGG" id="sse:Ssed_0179"/>
<dbReference type="eggNOG" id="COG0316">
    <property type="taxonomic scope" value="Bacteria"/>
</dbReference>
<dbReference type="eggNOG" id="COG0694">
    <property type="taxonomic scope" value="Bacteria"/>
</dbReference>
<dbReference type="HOGENOM" id="CLU_094569_0_0_6"/>
<dbReference type="OrthoDB" id="9785450at2"/>
<dbReference type="Proteomes" id="UP000002015">
    <property type="component" value="Chromosome"/>
</dbReference>
<dbReference type="GO" id="GO:0051539">
    <property type="term" value="F:4 iron, 4 sulfur cluster binding"/>
    <property type="evidence" value="ECO:0007669"/>
    <property type="project" value="UniProtKB-UniRule"/>
</dbReference>
<dbReference type="GO" id="GO:0005506">
    <property type="term" value="F:iron ion binding"/>
    <property type="evidence" value="ECO:0007669"/>
    <property type="project" value="InterPro"/>
</dbReference>
<dbReference type="GO" id="GO:0016226">
    <property type="term" value="P:iron-sulfur cluster assembly"/>
    <property type="evidence" value="ECO:0007669"/>
    <property type="project" value="UniProtKB-UniRule"/>
</dbReference>
<dbReference type="GO" id="GO:0051604">
    <property type="term" value="P:protein maturation"/>
    <property type="evidence" value="ECO:0007669"/>
    <property type="project" value="UniProtKB-UniRule"/>
</dbReference>
<dbReference type="Gene3D" id="3.30.300.130">
    <property type="entry name" value="Fe-S cluster assembly (FSCA)"/>
    <property type="match status" value="1"/>
</dbReference>
<dbReference type="Gene3D" id="2.60.300.12">
    <property type="entry name" value="HesB-like domain"/>
    <property type="match status" value="1"/>
</dbReference>
<dbReference type="HAMAP" id="MF_01637">
    <property type="entry name" value="Fe_S_biogen_NfuA"/>
    <property type="match status" value="1"/>
</dbReference>
<dbReference type="InterPro" id="IPR017726">
    <property type="entry name" value="Fe/S_biogenesis_protein_NfuA"/>
</dbReference>
<dbReference type="InterPro" id="IPR000361">
    <property type="entry name" value="FeS_biogenesis"/>
</dbReference>
<dbReference type="InterPro" id="IPR034904">
    <property type="entry name" value="FSCA_dom_sf"/>
</dbReference>
<dbReference type="InterPro" id="IPR035903">
    <property type="entry name" value="HesB-like_dom_sf"/>
</dbReference>
<dbReference type="InterPro" id="IPR001075">
    <property type="entry name" value="NIF_FeS_clus_asmbl_NifU_C"/>
</dbReference>
<dbReference type="NCBIfam" id="NF008392">
    <property type="entry name" value="PRK11190.1"/>
    <property type="match status" value="1"/>
</dbReference>
<dbReference type="NCBIfam" id="TIGR03341">
    <property type="entry name" value="YhgI_GntY"/>
    <property type="match status" value="1"/>
</dbReference>
<dbReference type="PANTHER" id="PTHR11178:SF51">
    <property type="entry name" value="FE_S BIOGENESIS PROTEIN NFUA"/>
    <property type="match status" value="1"/>
</dbReference>
<dbReference type="PANTHER" id="PTHR11178">
    <property type="entry name" value="IRON-SULFUR CLUSTER SCAFFOLD PROTEIN NFU-RELATED"/>
    <property type="match status" value="1"/>
</dbReference>
<dbReference type="Pfam" id="PF01521">
    <property type="entry name" value="Fe-S_biosyn"/>
    <property type="match status" value="1"/>
</dbReference>
<dbReference type="Pfam" id="PF01106">
    <property type="entry name" value="NifU"/>
    <property type="match status" value="1"/>
</dbReference>
<dbReference type="SUPFAM" id="SSF117916">
    <property type="entry name" value="Fe-S cluster assembly (FSCA) domain-like"/>
    <property type="match status" value="1"/>
</dbReference>
<dbReference type="SUPFAM" id="SSF89360">
    <property type="entry name" value="HesB-like domain"/>
    <property type="match status" value="1"/>
</dbReference>
<name>NFUA_SHESH</name>
<reference key="1">
    <citation type="submission" date="2007-08" db="EMBL/GenBank/DDBJ databases">
        <title>Complete sequence of Shewanella sediminis HAW-EB3.</title>
        <authorList>
            <consortium name="US DOE Joint Genome Institute"/>
            <person name="Copeland A."/>
            <person name="Lucas S."/>
            <person name="Lapidus A."/>
            <person name="Barry K."/>
            <person name="Glavina del Rio T."/>
            <person name="Dalin E."/>
            <person name="Tice H."/>
            <person name="Pitluck S."/>
            <person name="Chertkov O."/>
            <person name="Brettin T."/>
            <person name="Bruce D."/>
            <person name="Detter J.C."/>
            <person name="Han C."/>
            <person name="Schmutz J."/>
            <person name="Larimer F."/>
            <person name="Land M."/>
            <person name="Hauser L."/>
            <person name="Kyrpides N."/>
            <person name="Kim E."/>
            <person name="Zhao J.-S."/>
            <person name="Richardson P."/>
        </authorList>
    </citation>
    <scope>NUCLEOTIDE SEQUENCE [LARGE SCALE GENOMIC DNA]</scope>
    <source>
        <strain>HAW-EB3</strain>
    </source>
</reference>
<proteinExistence type="inferred from homology"/>
<accession>A8FPL9</accession>
<keyword id="KW-0004">4Fe-4S</keyword>
<keyword id="KW-0408">Iron</keyword>
<keyword id="KW-0411">Iron-sulfur</keyword>
<keyword id="KW-0479">Metal-binding</keyword>
<keyword id="KW-1185">Reference proteome</keyword>
<comment type="function">
    <text evidence="1">Involved in iron-sulfur cluster biogenesis. Binds a 4Fe-4S cluster, can transfer this cluster to apoproteins, and thereby intervenes in the maturation of Fe/S proteins. Could also act as a scaffold/chaperone for damaged Fe/S proteins.</text>
</comment>
<comment type="cofactor">
    <cofactor evidence="1">
        <name>[4Fe-4S] cluster</name>
        <dbReference type="ChEBI" id="CHEBI:49883"/>
    </cofactor>
    <text evidence="1">Binds 1 [4Fe-4S] cluster per subunit. The cluster is presumably bound at the interface of two monomers.</text>
</comment>
<comment type="subunit">
    <text evidence="1">Homodimer.</text>
</comment>
<comment type="similarity">
    <text evidence="1">Belongs to the NfuA family.</text>
</comment>
<evidence type="ECO:0000255" key="1">
    <source>
        <dbReference type="HAMAP-Rule" id="MF_01637"/>
    </source>
</evidence>
<protein>
    <recommendedName>
        <fullName evidence="1">Fe/S biogenesis protein NfuA</fullName>
    </recommendedName>
</protein>
<gene>
    <name evidence="1" type="primary">nfuA</name>
    <name type="ordered locus">Ssed_0179</name>
</gene>